<comment type="subcellular location">
    <subcellularLocation>
        <location evidence="5">Membrane</location>
        <topology evidence="5">Single-pass membrane protein</topology>
    </subcellularLocation>
</comment>
<comment type="alternative products">
    <event type="alternative splicing"/>
    <isoform>
        <id>Q8NDY8-1</id>
        <name>1</name>
        <sequence type="displayed"/>
    </isoform>
    <isoform>
        <id>Q8NDY8-2</id>
        <name>2</name>
        <sequence type="described" ref="VSP_024420"/>
    </isoform>
</comment>
<gene>
    <name type="primary">TMEM52</name>
    <name type="ORF">UNQ3048/PRO9864</name>
</gene>
<keyword id="KW-0025">Alternative splicing</keyword>
<keyword id="KW-0472">Membrane</keyword>
<keyword id="KW-1267">Proteomics identification</keyword>
<keyword id="KW-1185">Reference proteome</keyword>
<keyword id="KW-0732">Signal</keyword>
<keyword id="KW-0812">Transmembrane</keyword>
<keyword id="KW-1133">Transmembrane helix</keyword>
<accession>Q8NDY8</accession>
<accession>Q4VXS6</accession>
<accession>Q6UX25</accession>
<name>TMM52_HUMAN</name>
<organism>
    <name type="scientific">Homo sapiens</name>
    <name type="common">Human</name>
    <dbReference type="NCBI Taxonomy" id="9606"/>
    <lineage>
        <taxon>Eukaryota</taxon>
        <taxon>Metazoa</taxon>
        <taxon>Chordata</taxon>
        <taxon>Craniata</taxon>
        <taxon>Vertebrata</taxon>
        <taxon>Euteleostomi</taxon>
        <taxon>Mammalia</taxon>
        <taxon>Eutheria</taxon>
        <taxon>Euarchontoglires</taxon>
        <taxon>Primates</taxon>
        <taxon>Haplorrhini</taxon>
        <taxon>Catarrhini</taxon>
        <taxon>Hominidae</taxon>
        <taxon>Homo</taxon>
    </lineage>
</organism>
<feature type="signal peptide" evidence="1">
    <location>
        <begin position="1"/>
        <end position="32"/>
    </location>
</feature>
<feature type="chain" id="PRO_0000284057" description="Transmembrane protein 52">
    <location>
        <begin position="33"/>
        <end position="209"/>
    </location>
</feature>
<feature type="transmembrane region" description="Helical" evidence="1">
    <location>
        <begin position="56"/>
        <end position="76"/>
    </location>
</feature>
<feature type="region of interest" description="Disordered" evidence="2">
    <location>
        <begin position="145"/>
        <end position="209"/>
    </location>
</feature>
<feature type="compositionally biased region" description="Basic and acidic residues" evidence="2">
    <location>
        <begin position="159"/>
        <end position="170"/>
    </location>
</feature>
<feature type="compositionally biased region" description="Polar residues" evidence="2">
    <location>
        <begin position="186"/>
        <end position="202"/>
    </location>
</feature>
<feature type="splice variant" id="VSP_024420" description="In isoform 2." evidence="4">
    <original>ARGPLAARGLRLLLPLLPLLPLLPLPQVALGFADGSCDPSDQCPPQARWSSLWHVG</original>
    <variation>ERHCLLFILLTCLRWLCHDIPQGAGARWPRVSPVVEPCSPR</variation>
    <location>
        <begin position="2"/>
        <end position="57"/>
    </location>
</feature>
<feature type="sequence variant" id="VAR_031653" description="In dbSNP:rs28640257." evidence="3">
    <original>M</original>
    <variation>T</variation>
    <location>
        <position position="141"/>
    </location>
</feature>
<feature type="sequence variant" id="VAR_051448" description="In dbSNP:rs4459050.">
    <original>M</original>
    <variation>V</variation>
    <location>
        <position position="141"/>
    </location>
</feature>
<feature type="sequence conflict" description="In Ref. 2; AAQ88908." evidence="5" ref="2">
    <original>A</original>
    <variation>S</variation>
    <location sequence="Q8NDY8-2">
        <position position="25"/>
    </location>
</feature>
<proteinExistence type="evidence at protein level"/>
<dbReference type="EMBL" id="AJ278736">
    <property type="protein sequence ID" value="CAC82104.1"/>
    <property type="molecule type" value="mRNA"/>
</dbReference>
<dbReference type="EMBL" id="AY358544">
    <property type="protein sequence ID" value="AAQ88908.1"/>
    <property type="molecule type" value="mRNA"/>
</dbReference>
<dbReference type="EMBL" id="AL109917">
    <property type="status" value="NOT_ANNOTATED_CDS"/>
    <property type="molecule type" value="Genomic_DNA"/>
</dbReference>
<dbReference type="CCDS" id="CCDS35.1">
    <molecule id="Q8NDY8-1"/>
</dbReference>
<dbReference type="RefSeq" id="NP_848640.1">
    <molecule id="Q8NDY8-1"/>
    <property type="nucleotide sequence ID" value="NM_178545.4"/>
</dbReference>
<dbReference type="BioGRID" id="130887">
    <property type="interactions" value="1"/>
</dbReference>
<dbReference type="FunCoup" id="Q8NDY8">
    <property type="interactions" value="49"/>
</dbReference>
<dbReference type="IntAct" id="Q8NDY8">
    <property type="interactions" value="3"/>
</dbReference>
<dbReference type="STRING" id="9606.ENSP00000311122"/>
<dbReference type="iPTMnet" id="Q8NDY8"/>
<dbReference type="BioMuta" id="TMEM52"/>
<dbReference type="DMDM" id="74751239"/>
<dbReference type="MassIVE" id="Q8NDY8"/>
<dbReference type="PaxDb" id="9606-ENSP00000311122"/>
<dbReference type="PeptideAtlas" id="Q8NDY8"/>
<dbReference type="Antibodypedia" id="12513">
    <property type="antibodies" value="7 antibodies from 5 providers"/>
</dbReference>
<dbReference type="DNASU" id="339456"/>
<dbReference type="Ensembl" id="ENST00000310991.8">
    <molecule id="Q8NDY8-1"/>
    <property type="protein sequence ID" value="ENSP00000311122.3"/>
    <property type="gene ID" value="ENSG00000178821.13"/>
</dbReference>
<dbReference type="Ensembl" id="ENST00000378602.3">
    <molecule id="Q8NDY8-2"/>
    <property type="protein sequence ID" value="ENSP00000367865.3"/>
    <property type="gene ID" value="ENSG00000178821.13"/>
</dbReference>
<dbReference type="GeneID" id="339456"/>
<dbReference type="KEGG" id="hsa:339456"/>
<dbReference type="MANE-Select" id="ENST00000310991.8">
    <property type="protein sequence ID" value="ENSP00000311122.3"/>
    <property type="RefSeq nucleotide sequence ID" value="NM_178545.4"/>
    <property type="RefSeq protein sequence ID" value="NP_848640.1"/>
</dbReference>
<dbReference type="UCSC" id="uc001aii.2">
    <molecule id="Q8NDY8-1"/>
    <property type="organism name" value="human"/>
</dbReference>
<dbReference type="AGR" id="HGNC:27916"/>
<dbReference type="CTD" id="339456"/>
<dbReference type="DisGeNET" id="339456"/>
<dbReference type="GeneCards" id="TMEM52"/>
<dbReference type="HGNC" id="HGNC:27916">
    <property type="gene designation" value="TMEM52"/>
</dbReference>
<dbReference type="HPA" id="ENSG00000178821">
    <property type="expression patterns" value="Group enriched (pancreas, skeletal muscle, tongue)"/>
</dbReference>
<dbReference type="neXtProt" id="NX_Q8NDY8"/>
<dbReference type="OpenTargets" id="ENSG00000178821"/>
<dbReference type="PharmGKB" id="PA142670768"/>
<dbReference type="VEuPathDB" id="HostDB:ENSG00000178821"/>
<dbReference type="eggNOG" id="ENOG502S32F">
    <property type="taxonomic scope" value="Eukaryota"/>
</dbReference>
<dbReference type="GeneTree" id="ENSGT00730000111432"/>
<dbReference type="HOGENOM" id="CLU_100623_1_0_1"/>
<dbReference type="InParanoid" id="Q8NDY8"/>
<dbReference type="OMA" id="CDPSDLC"/>
<dbReference type="OrthoDB" id="9424925at2759"/>
<dbReference type="PAN-GO" id="Q8NDY8">
    <property type="GO annotations" value="0 GO annotations based on evolutionary models"/>
</dbReference>
<dbReference type="PhylomeDB" id="Q8NDY8"/>
<dbReference type="TreeFam" id="TF336037"/>
<dbReference type="PathwayCommons" id="Q8NDY8"/>
<dbReference type="SignaLink" id="Q8NDY8"/>
<dbReference type="BioGRID-ORCS" id="339456">
    <property type="hits" value="28 hits in 1161 CRISPR screens"/>
</dbReference>
<dbReference type="GenomeRNAi" id="339456"/>
<dbReference type="Pharos" id="Q8NDY8">
    <property type="development level" value="Tdark"/>
</dbReference>
<dbReference type="PRO" id="PR:Q8NDY8"/>
<dbReference type="Proteomes" id="UP000005640">
    <property type="component" value="Chromosome 1"/>
</dbReference>
<dbReference type="RNAct" id="Q8NDY8">
    <property type="molecule type" value="protein"/>
</dbReference>
<dbReference type="Bgee" id="ENSG00000178821">
    <property type="expression patterns" value="Expressed in hindlimb stylopod muscle and 120 other cell types or tissues"/>
</dbReference>
<dbReference type="ExpressionAtlas" id="Q8NDY8">
    <property type="expression patterns" value="baseline and differential"/>
</dbReference>
<dbReference type="GO" id="GO:0016020">
    <property type="term" value="C:membrane"/>
    <property type="evidence" value="ECO:0007669"/>
    <property type="project" value="UniProtKB-SubCell"/>
</dbReference>
<dbReference type="InterPro" id="IPR038942">
    <property type="entry name" value="TMEM52"/>
</dbReference>
<dbReference type="PANTHER" id="PTHR33955">
    <property type="entry name" value="TRANSMEMBRANE PROTEIN 52"/>
    <property type="match status" value="1"/>
</dbReference>
<dbReference type="PANTHER" id="PTHR33955:SF2">
    <property type="entry name" value="TRANSMEMBRANE PROTEIN 52"/>
    <property type="match status" value="1"/>
</dbReference>
<dbReference type="Pfam" id="PF14979">
    <property type="entry name" value="TMEM52"/>
    <property type="match status" value="1"/>
</dbReference>
<reference key="1">
    <citation type="submission" date="2000-07" db="EMBL/GenBank/DDBJ databases">
        <title>Full length sequencing of some human and murine muscular transcripts (Telethon Italy project B41).</title>
        <authorList>
            <person name="Ievolella C."/>
            <person name="Zara I."/>
            <person name="Frigimelica E."/>
            <person name="Faulkner G."/>
            <person name="Lanfranchi G."/>
        </authorList>
    </citation>
    <scope>NUCLEOTIDE SEQUENCE [MRNA] (ISOFORM 1)</scope>
    <source>
        <tissue>Skeletal muscle</tissue>
    </source>
</reference>
<reference key="2">
    <citation type="journal article" date="2003" name="Genome Res.">
        <title>The secreted protein discovery initiative (SPDI), a large-scale effort to identify novel human secreted and transmembrane proteins: a bioinformatics assessment.</title>
        <authorList>
            <person name="Clark H.F."/>
            <person name="Gurney A.L."/>
            <person name="Abaya E."/>
            <person name="Baker K."/>
            <person name="Baldwin D.T."/>
            <person name="Brush J."/>
            <person name="Chen J."/>
            <person name="Chow B."/>
            <person name="Chui C."/>
            <person name="Crowley C."/>
            <person name="Currell B."/>
            <person name="Deuel B."/>
            <person name="Dowd P."/>
            <person name="Eaton D."/>
            <person name="Foster J.S."/>
            <person name="Grimaldi C."/>
            <person name="Gu Q."/>
            <person name="Hass P.E."/>
            <person name="Heldens S."/>
            <person name="Huang A."/>
            <person name="Kim H.S."/>
            <person name="Klimowski L."/>
            <person name="Jin Y."/>
            <person name="Johnson S."/>
            <person name="Lee J."/>
            <person name="Lewis L."/>
            <person name="Liao D."/>
            <person name="Mark M.R."/>
            <person name="Robbie E."/>
            <person name="Sanchez C."/>
            <person name="Schoenfeld J."/>
            <person name="Seshagiri S."/>
            <person name="Simmons L."/>
            <person name="Singh J."/>
            <person name="Smith V."/>
            <person name="Stinson J."/>
            <person name="Vagts A."/>
            <person name="Vandlen R.L."/>
            <person name="Watanabe C."/>
            <person name="Wieand D."/>
            <person name="Woods K."/>
            <person name="Xie M.-H."/>
            <person name="Yansura D.G."/>
            <person name="Yi S."/>
            <person name="Yu G."/>
            <person name="Yuan J."/>
            <person name="Zhang M."/>
            <person name="Zhang Z."/>
            <person name="Goddard A.D."/>
            <person name="Wood W.I."/>
            <person name="Godowski P.J."/>
            <person name="Gray A.M."/>
        </authorList>
    </citation>
    <scope>NUCLEOTIDE SEQUENCE [LARGE SCALE MRNA] (ISOFORM 2)</scope>
    <scope>VARIANT THR-141</scope>
</reference>
<reference key="3">
    <citation type="journal article" date="2006" name="Nature">
        <title>The DNA sequence and biological annotation of human chromosome 1.</title>
        <authorList>
            <person name="Gregory S.G."/>
            <person name="Barlow K.F."/>
            <person name="McLay K.E."/>
            <person name="Kaul R."/>
            <person name="Swarbreck D."/>
            <person name="Dunham A."/>
            <person name="Scott C.E."/>
            <person name="Howe K.L."/>
            <person name="Woodfine K."/>
            <person name="Spencer C.C.A."/>
            <person name="Jones M.C."/>
            <person name="Gillson C."/>
            <person name="Searle S."/>
            <person name="Zhou Y."/>
            <person name="Kokocinski F."/>
            <person name="McDonald L."/>
            <person name="Evans R."/>
            <person name="Phillips K."/>
            <person name="Atkinson A."/>
            <person name="Cooper R."/>
            <person name="Jones C."/>
            <person name="Hall R.E."/>
            <person name="Andrews T.D."/>
            <person name="Lloyd C."/>
            <person name="Ainscough R."/>
            <person name="Almeida J.P."/>
            <person name="Ambrose K.D."/>
            <person name="Anderson F."/>
            <person name="Andrew R.W."/>
            <person name="Ashwell R.I.S."/>
            <person name="Aubin K."/>
            <person name="Babbage A.K."/>
            <person name="Bagguley C.L."/>
            <person name="Bailey J."/>
            <person name="Beasley H."/>
            <person name="Bethel G."/>
            <person name="Bird C.P."/>
            <person name="Bray-Allen S."/>
            <person name="Brown J.Y."/>
            <person name="Brown A.J."/>
            <person name="Buckley D."/>
            <person name="Burton J."/>
            <person name="Bye J."/>
            <person name="Carder C."/>
            <person name="Chapman J.C."/>
            <person name="Clark S.Y."/>
            <person name="Clarke G."/>
            <person name="Clee C."/>
            <person name="Cobley V."/>
            <person name="Collier R.E."/>
            <person name="Corby N."/>
            <person name="Coville G.J."/>
            <person name="Davies J."/>
            <person name="Deadman R."/>
            <person name="Dunn M."/>
            <person name="Earthrowl M."/>
            <person name="Ellington A.G."/>
            <person name="Errington H."/>
            <person name="Frankish A."/>
            <person name="Frankland J."/>
            <person name="French L."/>
            <person name="Garner P."/>
            <person name="Garnett J."/>
            <person name="Gay L."/>
            <person name="Ghori M.R.J."/>
            <person name="Gibson R."/>
            <person name="Gilby L.M."/>
            <person name="Gillett W."/>
            <person name="Glithero R.J."/>
            <person name="Grafham D.V."/>
            <person name="Griffiths C."/>
            <person name="Griffiths-Jones S."/>
            <person name="Grocock R."/>
            <person name="Hammond S."/>
            <person name="Harrison E.S.I."/>
            <person name="Hart E."/>
            <person name="Haugen E."/>
            <person name="Heath P.D."/>
            <person name="Holmes S."/>
            <person name="Holt K."/>
            <person name="Howden P.J."/>
            <person name="Hunt A.R."/>
            <person name="Hunt S.E."/>
            <person name="Hunter G."/>
            <person name="Isherwood J."/>
            <person name="James R."/>
            <person name="Johnson C."/>
            <person name="Johnson D."/>
            <person name="Joy A."/>
            <person name="Kay M."/>
            <person name="Kershaw J.K."/>
            <person name="Kibukawa M."/>
            <person name="Kimberley A.M."/>
            <person name="King A."/>
            <person name="Knights A.J."/>
            <person name="Lad H."/>
            <person name="Laird G."/>
            <person name="Lawlor S."/>
            <person name="Leongamornlert D.A."/>
            <person name="Lloyd D.M."/>
            <person name="Loveland J."/>
            <person name="Lovell J."/>
            <person name="Lush M.J."/>
            <person name="Lyne R."/>
            <person name="Martin S."/>
            <person name="Mashreghi-Mohammadi M."/>
            <person name="Matthews L."/>
            <person name="Matthews N.S.W."/>
            <person name="McLaren S."/>
            <person name="Milne S."/>
            <person name="Mistry S."/>
            <person name="Moore M.J.F."/>
            <person name="Nickerson T."/>
            <person name="O'Dell C.N."/>
            <person name="Oliver K."/>
            <person name="Palmeiri A."/>
            <person name="Palmer S.A."/>
            <person name="Parker A."/>
            <person name="Patel D."/>
            <person name="Pearce A.V."/>
            <person name="Peck A.I."/>
            <person name="Pelan S."/>
            <person name="Phelps K."/>
            <person name="Phillimore B.J."/>
            <person name="Plumb R."/>
            <person name="Rajan J."/>
            <person name="Raymond C."/>
            <person name="Rouse G."/>
            <person name="Saenphimmachak C."/>
            <person name="Sehra H.K."/>
            <person name="Sheridan E."/>
            <person name="Shownkeen R."/>
            <person name="Sims S."/>
            <person name="Skuce C.D."/>
            <person name="Smith M."/>
            <person name="Steward C."/>
            <person name="Subramanian S."/>
            <person name="Sycamore N."/>
            <person name="Tracey A."/>
            <person name="Tromans A."/>
            <person name="Van Helmond Z."/>
            <person name="Wall M."/>
            <person name="Wallis J.M."/>
            <person name="White S."/>
            <person name="Whitehead S.L."/>
            <person name="Wilkinson J.E."/>
            <person name="Willey D.L."/>
            <person name="Williams H."/>
            <person name="Wilming L."/>
            <person name="Wray P.W."/>
            <person name="Wu Z."/>
            <person name="Coulson A."/>
            <person name="Vaudin M."/>
            <person name="Sulston J.E."/>
            <person name="Durbin R.M."/>
            <person name="Hubbard T."/>
            <person name="Wooster R."/>
            <person name="Dunham I."/>
            <person name="Carter N.P."/>
            <person name="McVean G."/>
            <person name="Ross M.T."/>
            <person name="Harrow J."/>
            <person name="Olson M.V."/>
            <person name="Beck S."/>
            <person name="Rogers J."/>
            <person name="Bentley D.R."/>
        </authorList>
    </citation>
    <scope>NUCLEOTIDE SEQUENCE [LARGE SCALE GENOMIC DNA]</scope>
</reference>
<sequence>MARGPLAARGLRLLLPLLPLLPLLPLPQVALGFADGSCDPSDQCPPQARWSSLWHVGLILLAVLLLLLCGVTAGCVRFCCLRKQAQAQPHLPPARQPCDVAVIPMDSDSPVHSTVTSYSSVQYPLGMRLPLPFGELDLDSMAPPAYSLYTPEPPPSYDEAVKMAKPREEGPALSQKPSPLLGASGLETTPVPQESGPNTQLPPCSPGAP</sequence>
<protein>
    <recommendedName>
        <fullName>Transmembrane protein 52</fullName>
    </recommendedName>
</protein>
<evidence type="ECO:0000255" key="1"/>
<evidence type="ECO:0000256" key="2">
    <source>
        <dbReference type="SAM" id="MobiDB-lite"/>
    </source>
</evidence>
<evidence type="ECO:0000269" key="3">
    <source>
    </source>
</evidence>
<evidence type="ECO:0000303" key="4">
    <source>
    </source>
</evidence>
<evidence type="ECO:0000305" key="5"/>